<feature type="chain" id="PRO_0000389875" description="Acetyl-coenzyme A carboxylase carboxyl transferase subunit beta">
    <location>
        <begin position="1"/>
        <end position="288"/>
    </location>
</feature>
<feature type="domain" description="CoA carboxyltransferase N-terminal" evidence="2">
    <location>
        <begin position="34"/>
        <end position="288"/>
    </location>
</feature>
<feature type="zinc finger region" description="C4-type" evidence="1">
    <location>
        <begin position="38"/>
        <end position="59"/>
    </location>
</feature>
<feature type="binding site" evidence="1">
    <location>
        <position position="38"/>
    </location>
    <ligand>
        <name>Zn(2+)</name>
        <dbReference type="ChEBI" id="CHEBI:29105"/>
    </ligand>
</feature>
<feature type="binding site" evidence="1">
    <location>
        <position position="41"/>
    </location>
    <ligand>
        <name>Zn(2+)</name>
        <dbReference type="ChEBI" id="CHEBI:29105"/>
    </ligand>
</feature>
<feature type="binding site" evidence="1">
    <location>
        <position position="56"/>
    </location>
    <ligand>
        <name>Zn(2+)</name>
        <dbReference type="ChEBI" id="CHEBI:29105"/>
    </ligand>
</feature>
<feature type="binding site" evidence="1">
    <location>
        <position position="59"/>
    </location>
    <ligand>
        <name>Zn(2+)</name>
        <dbReference type="ChEBI" id="CHEBI:29105"/>
    </ligand>
</feature>
<sequence length="288" mass="31826">MALFRKKDKYIRITPNNSLKGSVSHNVPEVPDELFAKCPACKHMIYKKDLGLAKICPTCSYNFRISAQERLTLTVDEGSFQELFTSIETKDPLRFPGYQEKLQKAKETTGLHEAVLTGKAMVKEQKIALAIMDSHFIMASMGTVVGEKITRLFELAIEENLPVVIFTASGGARMQEGIMSLMQMAKVSAAVKRHSNAGLFYLTILTDPTTGGVTASFAMEGDIILAEPQSLVGFAGRRVIETTVRENLPDDFQKAEFLQDHGFVDAIVKRTELRDKIAHLVAFHGGGQ</sequence>
<comment type="function">
    <text evidence="1">Component of the acetyl coenzyme A carboxylase (ACC) complex. Biotin carboxylase (BC) catalyzes the carboxylation of biotin on its carrier protein (BCCP) and then the CO(2) group is transferred by the transcarboxylase to acetyl-CoA to form malonyl-CoA.</text>
</comment>
<comment type="catalytic activity">
    <reaction evidence="1">
        <text>N(6)-carboxybiotinyl-L-lysyl-[protein] + acetyl-CoA = N(6)-biotinyl-L-lysyl-[protein] + malonyl-CoA</text>
        <dbReference type="Rhea" id="RHEA:54728"/>
        <dbReference type="Rhea" id="RHEA-COMP:10505"/>
        <dbReference type="Rhea" id="RHEA-COMP:10506"/>
        <dbReference type="ChEBI" id="CHEBI:57288"/>
        <dbReference type="ChEBI" id="CHEBI:57384"/>
        <dbReference type="ChEBI" id="CHEBI:83144"/>
        <dbReference type="ChEBI" id="CHEBI:83145"/>
        <dbReference type="EC" id="2.1.3.15"/>
    </reaction>
</comment>
<comment type="cofactor">
    <cofactor evidence="1">
        <name>Zn(2+)</name>
        <dbReference type="ChEBI" id="CHEBI:29105"/>
    </cofactor>
    <text evidence="1">Binds 1 zinc ion per subunit.</text>
</comment>
<comment type="pathway">
    <text evidence="1">Lipid metabolism; malonyl-CoA biosynthesis; malonyl-CoA from acetyl-CoA: step 1/1.</text>
</comment>
<comment type="subunit">
    <text evidence="1">Acetyl-CoA carboxylase is a heterohexamer composed of biotin carboxyl carrier protein (AccB), biotin carboxylase (AccC) and two subunits each of ACCase subunit alpha (AccA) and ACCase subunit beta (AccD).</text>
</comment>
<comment type="subcellular location">
    <subcellularLocation>
        <location evidence="1">Cytoplasm</location>
    </subcellularLocation>
</comment>
<comment type="similarity">
    <text evidence="1">Belongs to the AccD/PCCB family.</text>
</comment>
<proteinExistence type="inferred from homology"/>
<dbReference type="EC" id="2.1.3.15" evidence="1"/>
<dbReference type="EMBL" id="CP000259">
    <property type="protein sequence ID" value="ABF32674.1"/>
    <property type="molecule type" value="Genomic_DNA"/>
</dbReference>
<dbReference type="RefSeq" id="WP_010922590.1">
    <property type="nucleotide sequence ID" value="NC_008021.1"/>
</dbReference>
<dbReference type="SMR" id="Q1JKE9"/>
<dbReference type="KEGG" id="spk:MGAS9429_Spy1487"/>
<dbReference type="HOGENOM" id="CLU_015486_1_1_9"/>
<dbReference type="UniPathway" id="UPA00655">
    <property type="reaction ID" value="UER00711"/>
</dbReference>
<dbReference type="Proteomes" id="UP000002433">
    <property type="component" value="Chromosome"/>
</dbReference>
<dbReference type="GO" id="GO:0009317">
    <property type="term" value="C:acetyl-CoA carboxylase complex"/>
    <property type="evidence" value="ECO:0007669"/>
    <property type="project" value="InterPro"/>
</dbReference>
<dbReference type="GO" id="GO:0003989">
    <property type="term" value="F:acetyl-CoA carboxylase activity"/>
    <property type="evidence" value="ECO:0007669"/>
    <property type="project" value="InterPro"/>
</dbReference>
<dbReference type="GO" id="GO:0005524">
    <property type="term" value="F:ATP binding"/>
    <property type="evidence" value="ECO:0007669"/>
    <property type="project" value="UniProtKB-KW"/>
</dbReference>
<dbReference type="GO" id="GO:0016743">
    <property type="term" value="F:carboxyl- or carbamoyltransferase activity"/>
    <property type="evidence" value="ECO:0007669"/>
    <property type="project" value="UniProtKB-UniRule"/>
</dbReference>
<dbReference type="GO" id="GO:0008270">
    <property type="term" value="F:zinc ion binding"/>
    <property type="evidence" value="ECO:0007669"/>
    <property type="project" value="UniProtKB-UniRule"/>
</dbReference>
<dbReference type="GO" id="GO:0006633">
    <property type="term" value="P:fatty acid biosynthetic process"/>
    <property type="evidence" value="ECO:0007669"/>
    <property type="project" value="UniProtKB-KW"/>
</dbReference>
<dbReference type="GO" id="GO:2001295">
    <property type="term" value="P:malonyl-CoA biosynthetic process"/>
    <property type="evidence" value="ECO:0007669"/>
    <property type="project" value="UniProtKB-UniRule"/>
</dbReference>
<dbReference type="Gene3D" id="3.90.226.10">
    <property type="entry name" value="2-enoyl-CoA Hydratase, Chain A, domain 1"/>
    <property type="match status" value="1"/>
</dbReference>
<dbReference type="HAMAP" id="MF_01395">
    <property type="entry name" value="AcetylCoA_CT_beta"/>
    <property type="match status" value="1"/>
</dbReference>
<dbReference type="InterPro" id="IPR034733">
    <property type="entry name" value="AcCoA_carboxyl_beta"/>
</dbReference>
<dbReference type="InterPro" id="IPR000438">
    <property type="entry name" value="Acetyl_CoA_COase_Trfase_b_su"/>
</dbReference>
<dbReference type="InterPro" id="IPR029045">
    <property type="entry name" value="ClpP/crotonase-like_dom_sf"/>
</dbReference>
<dbReference type="InterPro" id="IPR011762">
    <property type="entry name" value="COA_CT_N"/>
</dbReference>
<dbReference type="NCBIfam" id="TIGR00515">
    <property type="entry name" value="accD"/>
    <property type="match status" value="1"/>
</dbReference>
<dbReference type="PANTHER" id="PTHR42995">
    <property type="entry name" value="ACETYL-COENZYME A CARBOXYLASE CARBOXYL TRANSFERASE SUBUNIT BETA, CHLOROPLASTIC"/>
    <property type="match status" value="1"/>
</dbReference>
<dbReference type="PANTHER" id="PTHR42995:SF5">
    <property type="entry name" value="ACETYL-COENZYME A CARBOXYLASE CARBOXYL TRANSFERASE SUBUNIT BETA, CHLOROPLASTIC"/>
    <property type="match status" value="1"/>
</dbReference>
<dbReference type="Pfam" id="PF01039">
    <property type="entry name" value="Carboxyl_trans"/>
    <property type="match status" value="1"/>
</dbReference>
<dbReference type="PRINTS" id="PR01070">
    <property type="entry name" value="ACCCTRFRASEB"/>
</dbReference>
<dbReference type="SUPFAM" id="SSF52096">
    <property type="entry name" value="ClpP/crotonase"/>
    <property type="match status" value="1"/>
</dbReference>
<dbReference type="PROSITE" id="PS50980">
    <property type="entry name" value="COA_CT_NTER"/>
    <property type="match status" value="1"/>
</dbReference>
<accession>Q1JKE9</accession>
<evidence type="ECO:0000255" key="1">
    <source>
        <dbReference type="HAMAP-Rule" id="MF_01395"/>
    </source>
</evidence>
<evidence type="ECO:0000255" key="2">
    <source>
        <dbReference type="PROSITE-ProRule" id="PRU01136"/>
    </source>
</evidence>
<keyword id="KW-0067">ATP-binding</keyword>
<keyword id="KW-0963">Cytoplasm</keyword>
<keyword id="KW-0275">Fatty acid biosynthesis</keyword>
<keyword id="KW-0276">Fatty acid metabolism</keyword>
<keyword id="KW-0444">Lipid biosynthesis</keyword>
<keyword id="KW-0443">Lipid metabolism</keyword>
<keyword id="KW-0479">Metal-binding</keyword>
<keyword id="KW-0547">Nucleotide-binding</keyword>
<keyword id="KW-0808">Transferase</keyword>
<keyword id="KW-0862">Zinc</keyword>
<keyword id="KW-0863">Zinc-finger</keyword>
<reference key="1">
    <citation type="journal article" date="2006" name="Proc. Natl. Acad. Sci. U.S.A.">
        <title>Molecular genetic anatomy of inter- and intraserotype variation in the human bacterial pathogen group A Streptococcus.</title>
        <authorList>
            <person name="Beres S.B."/>
            <person name="Richter E.W."/>
            <person name="Nagiec M.J."/>
            <person name="Sumby P."/>
            <person name="Porcella S.F."/>
            <person name="DeLeo F.R."/>
            <person name="Musser J.M."/>
        </authorList>
    </citation>
    <scope>NUCLEOTIDE SEQUENCE [LARGE SCALE GENOMIC DNA]</scope>
    <source>
        <strain>MGAS9429</strain>
    </source>
</reference>
<gene>
    <name evidence="1" type="primary">accD</name>
    <name type="ordered locus">MGAS9429_Spy1487</name>
</gene>
<protein>
    <recommendedName>
        <fullName evidence="1">Acetyl-coenzyme A carboxylase carboxyl transferase subunit beta</fullName>
        <shortName evidence="1">ACCase subunit beta</shortName>
        <shortName evidence="1">Acetyl-CoA carboxylase carboxyltransferase subunit beta</shortName>
        <ecNumber evidence="1">2.1.3.15</ecNumber>
    </recommendedName>
</protein>
<name>ACCD_STRPC</name>
<organism>
    <name type="scientific">Streptococcus pyogenes serotype M12 (strain MGAS9429)</name>
    <dbReference type="NCBI Taxonomy" id="370551"/>
    <lineage>
        <taxon>Bacteria</taxon>
        <taxon>Bacillati</taxon>
        <taxon>Bacillota</taxon>
        <taxon>Bacilli</taxon>
        <taxon>Lactobacillales</taxon>
        <taxon>Streptococcaceae</taxon>
        <taxon>Streptococcus</taxon>
    </lineage>
</organism>